<keyword id="KW-0131">Cell cycle</keyword>
<keyword id="KW-0132">Cell division</keyword>
<keyword id="KW-0717">Septation</keyword>
<proteinExistence type="inferred from homology"/>
<gene>
    <name evidence="1" type="primary">minC</name>
    <name type="ordered locus">Shewmr7_2250</name>
</gene>
<sequence>MSKPSLELKGASFTLSVLHINSSDLNAVMAELDSKLAQAPQFFLGAPLVVNLSAIQDNDFNLHGLKELLLSRQLVIVGITGATIALSNQAKTLGLAIVKAGKQSVTPPPAPRQTKVLKQNIRSGQQVYAKNGDLIIFGAVGNGAEVIADGSIHIYGALRGKAMAGAAGDSSAVIIAHSLEAELVSIAGQYWLAENLQQHSSDKSGCIRLNGESLIVESLPL</sequence>
<organism>
    <name type="scientific">Shewanella sp. (strain MR-7)</name>
    <dbReference type="NCBI Taxonomy" id="60481"/>
    <lineage>
        <taxon>Bacteria</taxon>
        <taxon>Pseudomonadati</taxon>
        <taxon>Pseudomonadota</taxon>
        <taxon>Gammaproteobacteria</taxon>
        <taxon>Alteromonadales</taxon>
        <taxon>Shewanellaceae</taxon>
        <taxon>Shewanella</taxon>
    </lineage>
</organism>
<name>MINC_SHESR</name>
<feature type="chain" id="PRO_1000047863" description="Probable septum site-determining protein MinC">
    <location>
        <begin position="1"/>
        <end position="221"/>
    </location>
</feature>
<reference key="1">
    <citation type="submission" date="2006-08" db="EMBL/GenBank/DDBJ databases">
        <title>Complete sequence of chromosome 1 of Shewanella sp. MR-7.</title>
        <authorList>
            <person name="Copeland A."/>
            <person name="Lucas S."/>
            <person name="Lapidus A."/>
            <person name="Barry K."/>
            <person name="Detter J.C."/>
            <person name="Glavina del Rio T."/>
            <person name="Hammon N."/>
            <person name="Israni S."/>
            <person name="Dalin E."/>
            <person name="Tice H."/>
            <person name="Pitluck S."/>
            <person name="Kiss H."/>
            <person name="Brettin T."/>
            <person name="Bruce D."/>
            <person name="Han C."/>
            <person name="Tapia R."/>
            <person name="Gilna P."/>
            <person name="Schmutz J."/>
            <person name="Larimer F."/>
            <person name="Land M."/>
            <person name="Hauser L."/>
            <person name="Kyrpides N."/>
            <person name="Mikhailova N."/>
            <person name="Nealson K."/>
            <person name="Konstantinidis K."/>
            <person name="Klappenbach J."/>
            <person name="Tiedje J."/>
            <person name="Richardson P."/>
        </authorList>
    </citation>
    <scope>NUCLEOTIDE SEQUENCE [LARGE SCALE GENOMIC DNA]</scope>
    <source>
        <strain>MR-7</strain>
    </source>
</reference>
<comment type="function">
    <text evidence="1">Cell division inhibitor that blocks the formation of polar Z ring septums. Rapidly oscillates between the poles of the cell to destabilize FtsZ filaments that have formed before they mature into polar Z rings. Prevents FtsZ polymerization.</text>
</comment>
<comment type="subunit">
    <text evidence="1">Interacts with MinD and FtsZ.</text>
</comment>
<comment type="similarity">
    <text evidence="1">Belongs to the MinC family.</text>
</comment>
<protein>
    <recommendedName>
        <fullName evidence="1">Probable septum site-determining protein MinC</fullName>
    </recommendedName>
</protein>
<dbReference type="EMBL" id="CP000444">
    <property type="protein sequence ID" value="ABI43238.1"/>
    <property type="molecule type" value="Genomic_DNA"/>
</dbReference>
<dbReference type="SMR" id="Q0HUG7"/>
<dbReference type="KEGG" id="shm:Shewmr7_2250"/>
<dbReference type="HOGENOM" id="CLU_067812_0_1_6"/>
<dbReference type="GO" id="GO:0000902">
    <property type="term" value="P:cell morphogenesis"/>
    <property type="evidence" value="ECO:0007669"/>
    <property type="project" value="InterPro"/>
</dbReference>
<dbReference type="GO" id="GO:0000917">
    <property type="term" value="P:division septum assembly"/>
    <property type="evidence" value="ECO:0007669"/>
    <property type="project" value="UniProtKB-KW"/>
</dbReference>
<dbReference type="GO" id="GO:0051302">
    <property type="term" value="P:regulation of cell division"/>
    <property type="evidence" value="ECO:0007669"/>
    <property type="project" value="InterPro"/>
</dbReference>
<dbReference type="GO" id="GO:1901891">
    <property type="term" value="P:regulation of cell septum assembly"/>
    <property type="evidence" value="ECO:0007669"/>
    <property type="project" value="InterPro"/>
</dbReference>
<dbReference type="Gene3D" id="2.160.20.70">
    <property type="match status" value="1"/>
</dbReference>
<dbReference type="Gene3D" id="3.30.70.260">
    <property type="match status" value="1"/>
</dbReference>
<dbReference type="HAMAP" id="MF_00267">
    <property type="entry name" value="MinC"/>
    <property type="match status" value="1"/>
</dbReference>
<dbReference type="InterPro" id="IPR016098">
    <property type="entry name" value="CAP/MinC_C"/>
</dbReference>
<dbReference type="InterPro" id="IPR013033">
    <property type="entry name" value="MinC"/>
</dbReference>
<dbReference type="InterPro" id="IPR036145">
    <property type="entry name" value="MinC_C_sf"/>
</dbReference>
<dbReference type="InterPro" id="IPR007874">
    <property type="entry name" value="MinC_N"/>
</dbReference>
<dbReference type="InterPro" id="IPR005526">
    <property type="entry name" value="Septum_form_inhib_MinC_C"/>
</dbReference>
<dbReference type="NCBIfam" id="TIGR01222">
    <property type="entry name" value="minC"/>
    <property type="match status" value="1"/>
</dbReference>
<dbReference type="PANTHER" id="PTHR34108">
    <property type="entry name" value="SEPTUM SITE-DETERMINING PROTEIN MINC"/>
    <property type="match status" value="1"/>
</dbReference>
<dbReference type="PANTHER" id="PTHR34108:SF1">
    <property type="entry name" value="SEPTUM SITE-DETERMINING PROTEIN MINC"/>
    <property type="match status" value="1"/>
</dbReference>
<dbReference type="Pfam" id="PF03775">
    <property type="entry name" value="MinC_C"/>
    <property type="match status" value="1"/>
</dbReference>
<dbReference type="Pfam" id="PF05209">
    <property type="entry name" value="MinC_N"/>
    <property type="match status" value="1"/>
</dbReference>
<dbReference type="SUPFAM" id="SSF63848">
    <property type="entry name" value="Cell-division inhibitor MinC, C-terminal domain"/>
    <property type="match status" value="1"/>
</dbReference>
<accession>Q0HUG7</accession>
<evidence type="ECO:0000255" key="1">
    <source>
        <dbReference type="HAMAP-Rule" id="MF_00267"/>
    </source>
</evidence>